<accession>A7H1U1</accession>
<comment type="similarity">
    <text evidence="1">Belongs to the bacterial ribosomal protein bL35 family.</text>
</comment>
<gene>
    <name evidence="1" type="primary">rpmI</name>
    <name type="ordered locus">JJD26997_0241</name>
</gene>
<reference key="1">
    <citation type="submission" date="2007-07" db="EMBL/GenBank/DDBJ databases">
        <title>Complete genome sequence of Campylobacter jejuni subsp doylei 269.97 isolated from human blood.</title>
        <authorList>
            <person name="Fouts D.E."/>
            <person name="Mongodin E.F."/>
            <person name="Puiu D."/>
            <person name="Sebastian Y."/>
            <person name="Miller W.G."/>
            <person name="Mandrell R.E."/>
            <person name="Lastovica A.J."/>
            <person name="Nelson K.E."/>
        </authorList>
    </citation>
    <scope>NUCLEOTIDE SEQUENCE [LARGE SCALE GENOMIC DNA]</scope>
    <source>
        <strain>ATCC BAA-1458 / RM4099 / 269.97</strain>
    </source>
</reference>
<feature type="chain" id="PRO_1000050676" description="Large ribosomal subunit protein bL35">
    <location>
        <begin position="1"/>
        <end position="63"/>
    </location>
</feature>
<keyword id="KW-0687">Ribonucleoprotein</keyword>
<keyword id="KW-0689">Ribosomal protein</keyword>
<protein>
    <recommendedName>
        <fullName evidence="1">Large ribosomal subunit protein bL35</fullName>
    </recommendedName>
    <alternativeName>
        <fullName evidence="2">50S ribosomal protein L35</fullName>
    </alternativeName>
</protein>
<proteinExistence type="inferred from homology"/>
<name>RL35_CAMJD</name>
<sequence length="63" mass="7211">MPKMKSVKSAVKRFKVGKNKIKRGSAFRSHILTKKPAKRMRNLRTAKYVHSTNVKAVEKMLGI</sequence>
<organism>
    <name type="scientific">Campylobacter jejuni subsp. doylei (strain ATCC BAA-1458 / RM4099 / 269.97)</name>
    <dbReference type="NCBI Taxonomy" id="360109"/>
    <lineage>
        <taxon>Bacteria</taxon>
        <taxon>Pseudomonadati</taxon>
        <taxon>Campylobacterota</taxon>
        <taxon>Epsilonproteobacteria</taxon>
        <taxon>Campylobacterales</taxon>
        <taxon>Campylobacteraceae</taxon>
        <taxon>Campylobacter</taxon>
    </lineage>
</organism>
<evidence type="ECO:0000255" key="1">
    <source>
        <dbReference type="HAMAP-Rule" id="MF_00514"/>
    </source>
</evidence>
<evidence type="ECO:0000305" key="2"/>
<dbReference type="EMBL" id="CP000768">
    <property type="protein sequence ID" value="ABS43126.1"/>
    <property type="molecule type" value="Genomic_DNA"/>
</dbReference>
<dbReference type="SMR" id="A7H1U1"/>
<dbReference type="KEGG" id="cjd:JJD26997_0241"/>
<dbReference type="HOGENOM" id="CLU_169643_1_2_7"/>
<dbReference type="Proteomes" id="UP000002302">
    <property type="component" value="Chromosome"/>
</dbReference>
<dbReference type="GO" id="GO:0022625">
    <property type="term" value="C:cytosolic large ribosomal subunit"/>
    <property type="evidence" value="ECO:0007669"/>
    <property type="project" value="TreeGrafter"/>
</dbReference>
<dbReference type="GO" id="GO:0003735">
    <property type="term" value="F:structural constituent of ribosome"/>
    <property type="evidence" value="ECO:0007669"/>
    <property type="project" value="InterPro"/>
</dbReference>
<dbReference type="GO" id="GO:0006412">
    <property type="term" value="P:translation"/>
    <property type="evidence" value="ECO:0007669"/>
    <property type="project" value="UniProtKB-UniRule"/>
</dbReference>
<dbReference type="FunFam" id="4.10.410.60:FF:000001">
    <property type="entry name" value="50S ribosomal protein L35"/>
    <property type="match status" value="1"/>
</dbReference>
<dbReference type="Gene3D" id="4.10.410.60">
    <property type="match status" value="1"/>
</dbReference>
<dbReference type="HAMAP" id="MF_00514">
    <property type="entry name" value="Ribosomal_bL35"/>
    <property type="match status" value="1"/>
</dbReference>
<dbReference type="InterPro" id="IPR001706">
    <property type="entry name" value="Ribosomal_bL35"/>
</dbReference>
<dbReference type="InterPro" id="IPR021137">
    <property type="entry name" value="Ribosomal_bL35-like"/>
</dbReference>
<dbReference type="InterPro" id="IPR018265">
    <property type="entry name" value="Ribosomal_bL35_CS"/>
</dbReference>
<dbReference type="InterPro" id="IPR037229">
    <property type="entry name" value="Ribosomal_bL35_sf"/>
</dbReference>
<dbReference type="NCBIfam" id="TIGR00001">
    <property type="entry name" value="rpmI_bact"/>
    <property type="match status" value="1"/>
</dbReference>
<dbReference type="PANTHER" id="PTHR33343">
    <property type="entry name" value="54S RIBOSOMAL PROTEIN BL35M"/>
    <property type="match status" value="1"/>
</dbReference>
<dbReference type="PANTHER" id="PTHR33343:SF1">
    <property type="entry name" value="LARGE RIBOSOMAL SUBUNIT PROTEIN BL35M"/>
    <property type="match status" value="1"/>
</dbReference>
<dbReference type="Pfam" id="PF01632">
    <property type="entry name" value="Ribosomal_L35p"/>
    <property type="match status" value="1"/>
</dbReference>
<dbReference type="PRINTS" id="PR00064">
    <property type="entry name" value="RIBOSOMALL35"/>
</dbReference>
<dbReference type="SUPFAM" id="SSF143034">
    <property type="entry name" value="L35p-like"/>
    <property type="match status" value="1"/>
</dbReference>
<dbReference type="PROSITE" id="PS00936">
    <property type="entry name" value="RIBOSOMAL_L35"/>
    <property type="match status" value="1"/>
</dbReference>